<organism>
    <name type="scientific">Danio rerio</name>
    <name type="common">Zebrafish</name>
    <name type="synonym">Brachydanio rerio</name>
    <dbReference type="NCBI Taxonomy" id="7955"/>
    <lineage>
        <taxon>Eukaryota</taxon>
        <taxon>Metazoa</taxon>
        <taxon>Chordata</taxon>
        <taxon>Craniata</taxon>
        <taxon>Vertebrata</taxon>
        <taxon>Euteleostomi</taxon>
        <taxon>Actinopterygii</taxon>
        <taxon>Neopterygii</taxon>
        <taxon>Teleostei</taxon>
        <taxon>Ostariophysi</taxon>
        <taxon>Cypriniformes</taxon>
        <taxon>Danionidae</taxon>
        <taxon>Danioninae</taxon>
        <taxon>Danio</taxon>
    </lineage>
</organism>
<evidence type="ECO:0000250" key="1">
    <source>
        <dbReference type="UniProtKB" id="A0A1D9BZF0"/>
    </source>
</evidence>
<evidence type="ECO:0000250" key="2">
    <source>
        <dbReference type="UniProtKB" id="Q96QF7"/>
    </source>
</evidence>
<evidence type="ECO:0000255" key="3"/>
<evidence type="ECO:0000256" key="4">
    <source>
        <dbReference type="SAM" id="MobiDB-lite"/>
    </source>
</evidence>
<evidence type="ECO:0000269" key="5">
    <source>
    </source>
</evidence>
<evidence type="ECO:0000303" key="6">
    <source>
    </source>
</evidence>
<evidence type="ECO:0000305" key="7"/>
<dbReference type="EMBL" id="CR753843">
    <property type="status" value="NOT_ANNOTATED_CDS"/>
    <property type="molecule type" value="Genomic_DNA"/>
</dbReference>
<dbReference type="RefSeq" id="XP_021336691.1">
    <property type="nucleotide sequence ID" value="XM_021481016.2"/>
</dbReference>
<dbReference type="STRING" id="7955.ENSDARP00000141634"/>
<dbReference type="PaxDb" id="7955-ENSDARP00000104895"/>
<dbReference type="Ensembl" id="ENSDART00000169970">
    <property type="protein sequence ID" value="ENSDARP00000141634"/>
    <property type="gene ID" value="ENSDARG00000101060"/>
</dbReference>
<dbReference type="GeneID" id="541448"/>
<dbReference type="eggNOG" id="KOG3854">
    <property type="taxonomic scope" value="Eukaryota"/>
</dbReference>
<dbReference type="InParanoid" id="A0A0R4IWG9"/>
<dbReference type="OMA" id="VDMSVTW"/>
<dbReference type="OrthoDB" id="20772at2759"/>
<dbReference type="Proteomes" id="UP000000437">
    <property type="component" value="Chromosome 14"/>
</dbReference>
<dbReference type="Bgee" id="ENSDARG00000101060">
    <property type="expression patterns" value="Expressed in mature ovarian follicle and 26 other cell types or tissues"/>
</dbReference>
<dbReference type="GO" id="GO:0005694">
    <property type="term" value="C:chromosome"/>
    <property type="evidence" value="ECO:0007669"/>
    <property type="project" value="UniProtKB-SubCell"/>
</dbReference>
<dbReference type="GO" id="GO:0016605">
    <property type="term" value="C:PML body"/>
    <property type="evidence" value="ECO:0007669"/>
    <property type="project" value="UniProtKB-SubCell"/>
</dbReference>
<dbReference type="GO" id="GO:0106300">
    <property type="term" value="P:protein-DNA covalent cross-linking repair"/>
    <property type="evidence" value="ECO:0000315"/>
    <property type="project" value="UniProtKB"/>
</dbReference>
<dbReference type="InterPro" id="IPR006640">
    <property type="entry name" value="SprT-like_domain"/>
</dbReference>
<dbReference type="InterPro" id="IPR035240">
    <property type="entry name" value="SprT_Zn_ribbon"/>
</dbReference>
<dbReference type="PANTHER" id="PTHR23099:SF0">
    <property type="entry name" value="GERM CELL NUCLEAR ACIDIC PROTEIN"/>
    <property type="match status" value="1"/>
</dbReference>
<dbReference type="PANTHER" id="PTHR23099">
    <property type="entry name" value="TRANSCRIPTIONAL REGULATOR"/>
    <property type="match status" value="1"/>
</dbReference>
<dbReference type="Pfam" id="PF10263">
    <property type="entry name" value="SprT-like"/>
    <property type="match status" value="1"/>
</dbReference>
<dbReference type="Pfam" id="PF17283">
    <property type="entry name" value="Zn_ribbon_SprT"/>
    <property type="match status" value="1"/>
</dbReference>
<dbReference type="SMART" id="SM00731">
    <property type="entry name" value="SprT"/>
    <property type="match status" value="1"/>
</dbReference>
<reference key="1">
    <citation type="journal article" date="2013" name="Nature">
        <title>The zebrafish reference genome sequence and its relationship to the human genome.</title>
        <authorList>
            <person name="Howe K."/>
            <person name="Clark M.D."/>
            <person name="Torroja C.F."/>
            <person name="Torrance J."/>
            <person name="Berthelot C."/>
            <person name="Muffato M."/>
            <person name="Collins J.E."/>
            <person name="Humphray S."/>
            <person name="McLaren K."/>
            <person name="Matthews L."/>
            <person name="McLaren S."/>
            <person name="Sealy I."/>
            <person name="Caccamo M."/>
            <person name="Churcher C."/>
            <person name="Scott C."/>
            <person name="Barrett J.C."/>
            <person name="Koch R."/>
            <person name="Rauch G.J."/>
            <person name="White S."/>
            <person name="Chow W."/>
            <person name="Kilian B."/>
            <person name="Quintais L.T."/>
            <person name="Guerra-Assuncao J.A."/>
            <person name="Zhou Y."/>
            <person name="Gu Y."/>
            <person name="Yen J."/>
            <person name="Vogel J.H."/>
            <person name="Eyre T."/>
            <person name="Redmond S."/>
            <person name="Banerjee R."/>
            <person name="Chi J."/>
            <person name="Fu B."/>
            <person name="Langley E."/>
            <person name="Maguire S.F."/>
            <person name="Laird G.K."/>
            <person name="Lloyd D."/>
            <person name="Kenyon E."/>
            <person name="Donaldson S."/>
            <person name="Sehra H."/>
            <person name="Almeida-King J."/>
            <person name="Loveland J."/>
            <person name="Trevanion S."/>
            <person name="Jones M."/>
            <person name="Quail M."/>
            <person name="Willey D."/>
            <person name="Hunt A."/>
            <person name="Burton J."/>
            <person name="Sims S."/>
            <person name="McLay K."/>
            <person name="Plumb B."/>
            <person name="Davis J."/>
            <person name="Clee C."/>
            <person name="Oliver K."/>
            <person name="Clark R."/>
            <person name="Riddle C."/>
            <person name="Elliot D."/>
            <person name="Threadgold G."/>
            <person name="Harden G."/>
            <person name="Ware D."/>
            <person name="Begum S."/>
            <person name="Mortimore B."/>
            <person name="Kerry G."/>
            <person name="Heath P."/>
            <person name="Phillimore B."/>
            <person name="Tracey A."/>
            <person name="Corby N."/>
            <person name="Dunn M."/>
            <person name="Johnson C."/>
            <person name="Wood J."/>
            <person name="Clark S."/>
            <person name="Pelan S."/>
            <person name="Griffiths G."/>
            <person name="Smith M."/>
            <person name="Glithero R."/>
            <person name="Howden P."/>
            <person name="Barker N."/>
            <person name="Lloyd C."/>
            <person name="Stevens C."/>
            <person name="Harley J."/>
            <person name="Holt K."/>
            <person name="Panagiotidis G."/>
            <person name="Lovell J."/>
            <person name="Beasley H."/>
            <person name="Henderson C."/>
            <person name="Gordon D."/>
            <person name="Auger K."/>
            <person name="Wright D."/>
            <person name="Collins J."/>
            <person name="Raisen C."/>
            <person name="Dyer L."/>
            <person name="Leung K."/>
            <person name="Robertson L."/>
            <person name="Ambridge K."/>
            <person name="Leongamornlert D."/>
            <person name="McGuire S."/>
            <person name="Gilderthorp R."/>
            <person name="Griffiths C."/>
            <person name="Manthravadi D."/>
            <person name="Nichol S."/>
            <person name="Barker G."/>
            <person name="Whitehead S."/>
            <person name="Kay M."/>
            <person name="Brown J."/>
            <person name="Murnane C."/>
            <person name="Gray E."/>
            <person name="Humphries M."/>
            <person name="Sycamore N."/>
            <person name="Barker D."/>
            <person name="Saunders D."/>
            <person name="Wallis J."/>
            <person name="Babbage A."/>
            <person name="Hammond S."/>
            <person name="Mashreghi-Mohammadi M."/>
            <person name="Barr L."/>
            <person name="Martin S."/>
            <person name="Wray P."/>
            <person name="Ellington A."/>
            <person name="Matthews N."/>
            <person name="Ellwood M."/>
            <person name="Woodmansey R."/>
            <person name="Clark G."/>
            <person name="Cooper J."/>
            <person name="Tromans A."/>
            <person name="Grafham D."/>
            <person name="Skuce C."/>
            <person name="Pandian R."/>
            <person name="Andrews R."/>
            <person name="Harrison E."/>
            <person name="Kimberley A."/>
            <person name="Garnett J."/>
            <person name="Fosker N."/>
            <person name="Hall R."/>
            <person name="Garner P."/>
            <person name="Kelly D."/>
            <person name="Bird C."/>
            <person name="Palmer S."/>
            <person name="Gehring I."/>
            <person name="Berger A."/>
            <person name="Dooley C.M."/>
            <person name="Ersan-Urun Z."/>
            <person name="Eser C."/>
            <person name="Geiger H."/>
            <person name="Geisler M."/>
            <person name="Karotki L."/>
            <person name="Kirn A."/>
            <person name="Konantz J."/>
            <person name="Konantz M."/>
            <person name="Oberlander M."/>
            <person name="Rudolph-Geiger S."/>
            <person name="Teucke M."/>
            <person name="Lanz C."/>
            <person name="Raddatz G."/>
            <person name="Osoegawa K."/>
            <person name="Zhu B."/>
            <person name="Rapp A."/>
            <person name="Widaa S."/>
            <person name="Langford C."/>
            <person name="Yang F."/>
            <person name="Schuster S.C."/>
            <person name="Carter N.P."/>
            <person name="Harrow J."/>
            <person name="Ning Z."/>
            <person name="Herrero J."/>
            <person name="Searle S.M."/>
            <person name="Enright A."/>
            <person name="Geisler R."/>
            <person name="Plasterk R.H."/>
            <person name="Lee C."/>
            <person name="Westerfield M."/>
            <person name="de Jong P.J."/>
            <person name="Zon L.I."/>
            <person name="Postlethwait J.H."/>
            <person name="Nusslein-Volhard C."/>
            <person name="Hubbard T.J."/>
            <person name="Roest Crollius H."/>
            <person name="Rogers J."/>
            <person name="Stemple D.L."/>
        </authorList>
    </citation>
    <scope>NUCLEOTIDE SEQUENCE [LARGE SCALE GENOMIC DNA]</scope>
    <source>
        <strain>Tuebingen</strain>
    </source>
</reference>
<reference key="2">
    <citation type="journal article" date="2020" name="Dev. Cell">
        <title>GCNA Preserves Genome Integrity and Fertility Across Species.</title>
        <authorList>
            <person name="Bhargava V."/>
            <person name="Goldstein C.D."/>
            <person name="Russell L."/>
            <person name="Xu L."/>
            <person name="Ahmed M."/>
            <person name="Li W."/>
            <person name="Casey A."/>
            <person name="Servage K."/>
            <person name="Kollipara R."/>
            <person name="Picciarelli Z."/>
            <person name="Kittler R."/>
            <person name="Yatsenko A."/>
            <person name="Carmell M."/>
            <person name="Orth K."/>
            <person name="Amatruda J.F."/>
            <person name="Yanowitz J.L."/>
            <person name="Buszczak M."/>
        </authorList>
    </citation>
    <scope>DISRUPTION PHENOTYPE</scope>
    <scope>FUNCTION</scope>
</reference>
<sequence>MDPGTLSLFQRVSTKLGWDRDGGLDDAEEKLRKSLKKTRRPALASSDSSTGPAQRLELSDSDNSSGKENRSQEEHILLTSDDEDFEKFLASKATPKSTFKQSASSAQKPREPVPVLSSESDNEFELFLNRVKTPKAKVQPQSMSSSDESLKHFIVDSMSSDDDFVTEKKPSIYKGKAKTVKTPKSVQKTKKPAPSLCNSPVFLSDSDDDCNIVIKSTWRTRHSRPPSDEHQATSKDREETEKPRVPQPTITVKSHTSRDDTCSSEEEFQSLLDRVRQNLGGRTSASPMPSAEPKPQRPCLSTPSATGRKTGSQVPVKDSPVIHTPVQQMPSSRPVLSHTEPRALPNSRVVVCKTPGCFLQSLSAPGSVYCRSFKQNKDELTSKLYQLYNTSVFDSQLPVDMSVTWNNKMRKTAGYCISGQERGTGKRYARIELSVKVCDSADRLRDTLIHEMCHAATWLINNVRDGHGPFWRLYARKAMLAHPELPMVSRCHSYDINYKFQYQCNRCKNTIGRHSKSLDTTKFVCALCTGQLVLLTPSKPRAPTPFATFVKENYGSTKQELTGQSHAEIMRKLSADFASKTRLSQS</sequence>
<proteinExistence type="inferred from homology"/>
<feature type="chain" id="PRO_0000454373" description="Germ cell nuclear acidic protein">
    <location>
        <begin position="1"/>
        <end position="586"/>
    </location>
</feature>
<feature type="domain" description="SprT-like" evidence="3">
    <location>
        <begin position="383"/>
        <end position="482"/>
    </location>
</feature>
<feature type="region of interest" description="Disordered" evidence="4">
    <location>
        <begin position="17"/>
        <end position="119"/>
    </location>
</feature>
<feature type="region of interest" description="Disordered" evidence="4">
    <location>
        <begin position="176"/>
        <end position="202"/>
    </location>
</feature>
<feature type="region of interest" description="Disordered" evidence="4">
    <location>
        <begin position="217"/>
        <end position="266"/>
    </location>
</feature>
<feature type="region of interest" description="Disordered" evidence="4">
    <location>
        <begin position="279"/>
        <end position="318"/>
    </location>
</feature>
<feature type="compositionally biased region" description="Basic and acidic residues" evidence="4">
    <location>
        <begin position="65"/>
        <end position="76"/>
    </location>
</feature>
<feature type="compositionally biased region" description="Polar residues" evidence="4">
    <location>
        <begin position="94"/>
        <end position="107"/>
    </location>
</feature>
<feature type="compositionally biased region" description="Basic residues" evidence="4">
    <location>
        <begin position="176"/>
        <end position="191"/>
    </location>
</feature>
<feature type="compositionally biased region" description="Basic and acidic residues" evidence="4">
    <location>
        <begin position="225"/>
        <end position="244"/>
    </location>
</feature>
<feature type="compositionally biased region" description="Polar residues" evidence="4">
    <location>
        <begin position="299"/>
        <end position="313"/>
    </location>
</feature>
<accession>A0A0R4IWG9</accession>
<gene>
    <name type="primary">gcna</name>
    <name type="synonym">acrc</name>
</gene>
<keyword id="KW-0158">Chromosome</keyword>
<keyword id="KW-0539">Nucleus</keyword>
<keyword id="KW-1185">Reference proteome</keyword>
<protein>
    <recommendedName>
        <fullName evidence="2">Germ cell nuclear acidic protein</fullName>
    </recommendedName>
    <alternativeName>
        <fullName evidence="2">Acidic repeat-containing protein</fullName>
    </alternativeName>
    <alternativeName>
        <fullName evidence="6">Germ cell nuclear acidic peptidase</fullName>
    </alternativeName>
</protein>
<name>GCNA_DANRE</name>
<comment type="function">
    <text evidence="5">May play a role in DNA-protein cross-links (DPCs) clearance, ensuring the genomic stability by protecting germ cells and early embryos from various sources of damage.</text>
</comment>
<comment type="subcellular location">
    <subcellularLocation>
        <location evidence="2">Nucleus</location>
    </subcellularLocation>
    <subcellularLocation>
        <location evidence="2">Nucleus</location>
        <location evidence="2">PML body</location>
    </subcellularLocation>
    <subcellularLocation>
        <location evidence="1">Chromosome</location>
    </subcellularLocation>
    <text evidence="1 2">Co-localizes with SUMO2 at PML bodies in all interphase cells (By similarity). Localizes on condensed chromosomes in spermatocytes in G2 and M during meiotic prophase (By similarity).</text>
</comment>
<comment type="disruption phenotype">
    <text evidence="5">Progeny of mutant females display widespread morphological defects and cell death and early embryos have asynchronous mitotic divisions and tangled chromosomes.</text>
</comment>
<comment type="similarity">
    <text evidence="7">Belongs to the serine-aspartate repeat-containing protein (SDr) family.</text>
</comment>